<sequence>MDHIRNFSIIAHIDHGKSTLADRIIQICGGLSDREMESQVLDSMDLERERGITIKAQTAALTYKARDGQVYNLNMIDTPGHVDFSYEVSRSLSACEGALLVVDASQGVEAQTVANCYTAIELGVDVIPVLNKIDLPAANPENAIAEIEDVIGIDATDATRCSAKTGLGVEDVLEALVAKVPPPKGDPEAPLQALIIDSWFDNYVGVVMLVRIVNGTLRPKDKIRMMATGAQYPVEHIGVFTPKSKNLESLSAGQVGFIIAGIKELAAAKVGDTVTLVNRPAAEPLPGFKEVKPQVFAGLYPVEANQYDALRDSLEKLKLNDASLMYEPEVSQALGFGFRCGFLGLLHMEIVQERLEREFDMDLITTAPTVVYEVLQRDGTTIMVENPAKMPEPSKIEEVREPIVTVNLYMPQDYVGSVITLCTQKRGTQINMQYHGRQVQLTYEIPMGEVVLDFFDRLKSISRGYASMDYEFKEYRAADVVKVDMLINGDKVDALSVIVHRSQSQYRGREVASKMRELIPRQMYDVAIQATIGANIIARENIKALRKNVLAKCYGGDISRKKKLLEKQKAGKKRMKQVGSVEIPQEAFLAILRVEDK</sequence>
<proteinExistence type="inferred from homology"/>
<evidence type="ECO:0000255" key="1">
    <source>
        <dbReference type="HAMAP-Rule" id="MF_00071"/>
    </source>
</evidence>
<organism>
    <name type="scientific">Paraburkholderia xenovorans (strain LB400)</name>
    <dbReference type="NCBI Taxonomy" id="266265"/>
    <lineage>
        <taxon>Bacteria</taxon>
        <taxon>Pseudomonadati</taxon>
        <taxon>Pseudomonadota</taxon>
        <taxon>Betaproteobacteria</taxon>
        <taxon>Burkholderiales</taxon>
        <taxon>Burkholderiaceae</taxon>
        <taxon>Paraburkholderia</taxon>
    </lineage>
</organism>
<reference key="1">
    <citation type="journal article" date="2006" name="Proc. Natl. Acad. Sci. U.S.A.">
        <title>Burkholderia xenovorans LB400 harbors a multi-replicon, 9.73-Mbp genome shaped for versatility.</title>
        <authorList>
            <person name="Chain P.S.G."/>
            <person name="Denef V.J."/>
            <person name="Konstantinidis K.T."/>
            <person name="Vergez L.M."/>
            <person name="Agullo L."/>
            <person name="Reyes V.L."/>
            <person name="Hauser L."/>
            <person name="Cordova M."/>
            <person name="Gomez L."/>
            <person name="Gonzalez M."/>
            <person name="Land M."/>
            <person name="Lao V."/>
            <person name="Larimer F."/>
            <person name="LiPuma J.J."/>
            <person name="Mahenthiralingam E."/>
            <person name="Malfatti S.A."/>
            <person name="Marx C.J."/>
            <person name="Parnell J.J."/>
            <person name="Ramette A."/>
            <person name="Richardson P."/>
            <person name="Seeger M."/>
            <person name="Smith D."/>
            <person name="Spilker T."/>
            <person name="Sul W.J."/>
            <person name="Tsoi T.V."/>
            <person name="Ulrich L.E."/>
            <person name="Zhulin I.B."/>
            <person name="Tiedje J.M."/>
        </authorList>
    </citation>
    <scope>NUCLEOTIDE SEQUENCE [LARGE SCALE GENOMIC DNA]</scope>
    <source>
        <strain>LB400</strain>
    </source>
</reference>
<feature type="chain" id="PRO_0000265645" description="Elongation factor 4">
    <location>
        <begin position="1"/>
        <end position="597"/>
    </location>
</feature>
<feature type="domain" description="tr-type G">
    <location>
        <begin position="2"/>
        <end position="184"/>
    </location>
</feature>
<feature type="binding site" evidence="1">
    <location>
        <begin position="14"/>
        <end position="19"/>
    </location>
    <ligand>
        <name>GTP</name>
        <dbReference type="ChEBI" id="CHEBI:37565"/>
    </ligand>
</feature>
<feature type="binding site" evidence="1">
    <location>
        <begin position="131"/>
        <end position="134"/>
    </location>
    <ligand>
        <name>GTP</name>
        <dbReference type="ChEBI" id="CHEBI:37565"/>
    </ligand>
</feature>
<accession>Q13VM6</accession>
<comment type="function">
    <text evidence="1">Required for accurate and efficient protein synthesis under certain stress conditions. May act as a fidelity factor of the translation reaction, by catalyzing a one-codon backward translocation of tRNAs on improperly translocated ribosomes. Back-translocation proceeds from a post-translocation (POST) complex to a pre-translocation (PRE) complex, thus giving elongation factor G a second chance to translocate the tRNAs correctly. Binds to ribosomes in a GTP-dependent manner.</text>
</comment>
<comment type="catalytic activity">
    <reaction evidence="1">
        <text>GTP + H2O = GDP + phosphate + H(+)</text>
        <dbReference type="Rhea" id="RHEA:19669"/>
        <dbReference type="ChEBI" id="CHEBI:15377"/>
        <dbReference type="ChEBI" id="CHEBI:15378"/>
        <dbReference type="ChEBI" id="CHEBI:37565"/>
        <dbReference type="ChEBI" id="CHEBI:43474"/>
        <dbReference type="ChEBI" id="CHEBI:58189"/>
        <dbReference type="EC" id="3.6.5.n1"/>
    </reaction>
</comment>
<comment type="subcellular location">
    <subcellularLocation>
        <location evidence="1">Cell inner membrane</location>
        <topology evidence="1">Peripheral membrane protein</topology>
        <orientation evidence="1">Cytoplasmic side</orientation>
    </subcellularLocation>
</comment>
<comment type="similarity">
    <text evidence="1">Belongs to the TRAFAC class translation factor GTPase superfamily. Classic translation factor GTPase family. LepA subfamily.</text>
</comment>
<name>LEPA_PARXL</name>
<protein>
    <recommendedName>
        <fullName evidence="1">Elongation factor 4</fullName>
        <shortName evidence="1">EF-4</shortName>
        <ecNumber evidence="1">3.6.5.n1</ecNumber>
    </recommendedName>
    <alternativeName>
        <fullName evidence="1">Ribosomal back-translocase LepA</fullName>
    </alternativeName>
</protein>
<gene>
    <name evidence="1" type="primary">lepA</name>
    <name type="ordered locus">Bxeno_A3325</name>
    <name type="ORF">Bxe_A1083</name>
</gene>
<keyword id="KW-0997">Cell inner membrane</keyword>
<keyword id="KW-1003">Cell membrane</keyword>
<keyword id="KW-0342">GTP-binding</keyword>
<keyword id="KW-0378">Hydrolase</keyword>
<keyword id="KW-0472">Membrane</keyword>
<keyword id="KW-0547">Nucleotide-binding</keyword>
<keyword id="KW-0648">Protein biosynthesis</keyword>
<keyword id="KW-1185">Reference proteome</keyword>
<dbReference type="EC" id="3.6.5.n1" evidence="1"/>
<dbReference type="EMBL" id="CP000270">
    <property type="protein sequence ID" value="ABE31863.1"/>
    <property type="molecule type" value="Genomic_DNA"/>
</dbReference>
<dbReference type="RefSeq" id="WP_011489386.1">
    <property type="nucleotide sequence ID" value="NC_007951.1"/>
</dbReference>
<dbReference type="SMR" id="Q13VM6"/>
<dbReference type="STRING" id="266265.Bxe_A1083"/>
<dbReference type="KEGG" id="bxb:DR64_3246"/>
<dbReference type="KEGG" id="bxe:Bxe_A1083"/>
<dbReference type="PATRIC" id="fig|266265.5.peg.3491"/>
<dbReference type="eggNOG" id="COG0481">
    <property type="taxonomic scope" value="Bacteria"/>
</dbReference>
<dbReference type="OrthoDB" id="9801472at2"/>
<dbReference type="Proteomes" id="UP000001817">
    <property type="component" value="Chromosome 1"/>
</dbReference>
<dbReference type="GO" id="GO:0005886">
    <property type="term" value="C:plasma membrane"/>
    <property type="evidence" value="ECO:0007669"/>
    <property type="project" value="UniProtKB-SubCell"/>
</dbReference>
<dbReference type="GO" id="GO:0005525">
    <property type="term" value="F:GTP binding"/>
    <property type="evidence" value="ECO:0007669"/>
    <property type="project" value="UniProtKB-UniRule"/>
</dbReference>
<dbReference type="GO" id="GO:0003924">
    <property type="term" value="F:GTPase activity"/>
    <property type="evidence" value="ECO:0007669"/>
    <property type="project" value="UniProtKB-UniRule"/>
</dbReference>
<dbReference type="GO" id="GO:0097216">
    <property type="term" value="F:guanosine tetraphosphate binding"/>
    <property type="evidence" value="ECO:0007669"/>
    <property type="project" value="UniProtKB-ARBA"/>
</dbReference>
<dbReference type="GO" id="GO:0043022">
    <property type="term" value="F:ribosome binding"/>
    <property type="evidence" value="ECO:0007669"/>
    <property type="project" value="UniProtKB-UniRule"/>
</dbReference>
<dbReference type="GO" id="GO:0003746">
    <property type="term" value="F:translation elongation factor activity"/>
    <property type="evidence" value="ECO:0007669"/>
    <property type="project" value="UniProtKB-UniRule"/>
</dbReference>
<dbReference type="GO" id="GO:0045727">
    <property type="term" value="P:positive regulation of translation"/>
    <property type="evidence" value="ECO:0007669"/>
    <property type="project" value="UniProtKB-UniRule"/>
</dbReference>
<dbReference type="CDD" id="cd03699">
    <property type="entry name" value="EF4_II"/>
    <property type="match status" value="1"/>
</dbReference>
<dbReference type="CDD" id="cd16260">
    <property type="entry name" value="EF4_III"/>
    <property type="match status" value="1"/>
</dbReference>
<dbReference type="CDD" id="cd01890">
    <property type="entry name" value="LepA"/>
    <property type="match status" value="1"/>
</dbReference>
<dbReference type="CDD" id="cd03709">
    <property type="entry name" value="lepA_C"/>
    <property type="match status" value="1"/>
</dbReference>
<dbReference type="FunFam" id="3.40.50.300:FF:000078">
    <property type="entry name" value="Elongation factor 4"/>
    <property type="match status" value="1"/>
</dbReference>
<dbReference type="FunFam" id="2.40.30.10:FF:000015">
    <property type="entry name" value="Translation factor GUF1, mitochondrial"/>
    <property type="match status" value="1"/>
</dbReference>
<dbReference type="FunFam" id="3.30.70.240:FF:000007">
    <property type="entry name" value="Translation factor GUF1, mitochondrial"/>
    <property type="match status" value="1"/>
</dbReference>
<dbReference type="FunFam" id="3.30.70.2570:FF:000001">
    <property type="entry name" value="Translation factor GUF1, mitochondrial"/>
    <property type="match status" value="1"/>
</dbReference>
<dbReference type="FunFam" id="3.30.70.870:FF:000004">
    <property type="entry name" value="Translation factor GUF1, mitochondrial"/>
    <property type="match status" value="1"/>
</dbReference>
<dbReference type="Gene3D" id="3.30.70.240">
    <property type="match status" value="1"/>
</dbReference>
<dbReference type="Gene3D" id="3.30.70.2570">
    <property type="entry name" value="Elongation factor 4, C-terminal domain"/>
    <property type="match status" value="1"/>
</dbReference>
<dbReference type="Gene3D" id="3.30.70.870">
    <property type="entry name" value="Elongation Factor G (Translational Gtpase), domain 3"/>
    <property type="match status" value="1"/>
</dbReference>
<dbReference type="Gene3D" id="3.40.50.300">
    <property type="entry name" value="P-loop containing nucleotide triphosphate hydrolases"/>
    <property type="match status" value="1"/>
</dbReference>
<dbReference type="Gene3D" id="2.40.30.10">
    <property type="entry name" value="Translation factors"/>
    <property type="match status" value="1"/>
</dbReference>
<dbReference type="HAMAP" id="MF_00071">
    <property type="entry name" value="LepA"/>
    <property type="match status" value="1"/>
</dbReference>
<dbReference type="InterPro" id="IPR006297">
    <property type="entry name" value="EF-4"/>
</dbReference>
<dbReference type="InterPro" id="IPR035647">
    <property type="entry name" value="EFG_III/V"/>
</dbReference>
<dbReference type="InterPro" id="IPR000640">
    <property type="entry name" value="EFG_V-like"/>
</dbReference>
<dbReference type="InterPro" id="IPR004161">
    <property type="entry name" value="EFTu-like_2"/>
</dbReference>
<dbReference type="InterPro" id="IPR031157">
    <property type="entry name" value="G_TR_CS"/>
</dbReference>
<dbReference type="InterPro" id="IPR038363">
    <property type="entry name" value="LepA_C_sf"/>
</dbReference>
<dbReference type="InterPro" id="IPR013842">
    <property type="entry name" value="LepA_CTD"/>
</dbReference>
<dbReference type="InterPro" id="IPR035654">
    <property type="entry name" value="LepA_IV"/>
</dbReference>
<dbReference type="InterPro" id="IPR027417">
    <property type="entry name" value="P-loop_NTPase"/>
</dbReference>
<dbReference type="InterPro" id="IPR005225">
    <property type="entry name" value="Small_GTP-bd"/>
</dbReference>
<dbReference type="InterPro" id="IPR000795">
    <property type="entry name" value="T_Tr_GTP-bd_dom"/>
</dbReference>
<dbReference type="InterPro" id="IPR009000">
    <property type="entry name" value="Transl_B-barrel_sf"/>
</dbReference>
<dbReference type="NCBIfam" id="TIGR01393">
    <property type="entry name" value="lepA"/>
    <property type="match status" value="1"/>
</dbReference>
<dbReference type="NCBIfam" id="TIGR00231">
    <property type="entry name" value="small_GTP"/>
    <property type="match status" value="1"/>
</dbReference>
<dbReference type="PANTHER" id="PTHR43512:SF4">
    <property type="entry name" value="TRANSLATION FACTOR GUF1 HOMOLOG, CHLOROPLASTIC"/>
    <property type="match status" value="1"/>
</dbReference>
<dbReference type="PANTHER" id="PTHR43512">
    <property type="entry name" value="TRANSLATION FACTOR GUF1-RELATED"/>
    <property type="match status" value="1"/>
</dbReference>
<dbReference type="Pfam" id="PF00679">
    <property type="entry name" value="EFG_C"/>
    <property type="match status" value="1"/>
</dbReference>
<dbReference type="Pfam" id="PF00009">
    <property type="entry name" value="GTP_EFTU"/>
    <property type="match status" value="1"/>
</dbReference>
<dbReference type="Pfam" id="PF03144">
    <property type="entry name" value="GTP_EFTU_D2"/>
    <property type="match status" value="1"/>
</dbReference>
<dbReference type="Pfam" id="PF06421">
    <property type="entry name" value="LepA_C"/>
    <property type="match status" value="1"/>
</dbReference>
<dbReference type="PRINTS" id="PR00315">
    <property type="entry name" value="ELONGATNFCT"/>
</dbReference>
<dbReference type="SMART" id="SM00838">
    <property type="entry name" value="EFG_C"/>
    <property type="match status" value="1"/>
</dbReference>
<dbReference type="SUPFAM" id="SSF54980">
    <property type="entry name" value="EF-G C-terminal domain-like"/>
    <property type="match status" value="2"/>
</dbReference>
<dbReference type="SUPFAM" id="SSF52540">
    <property type="entry name" value="P-loop containing nucleoside triphosphate hydrolases"/>
    <property type="match status" value="1"/>
</dbReference>
<dbReference type="SUPFAM" id="SSF50447">
    <property type="entry name" value="Translation proteins"/>
    <property type="match status" value="1"/>
</dbReference>
<dbReference type="PROSITE" id="PS00301">
    <property type="entry name" value="G_TR_1"/>
    <property type="match status" value="1"/>
</dbReference>
<dbReference type="PROSITE" id="PS51722">
    <property type="entry name" value="G_TR_2"/>
    <property type="match status" value="1"/>
</dbReference>